<feature type="chain" id="PRO_0000183457" description="Cytochrome c oxidase subunit 1">
    <location>
        <begin position="1"/>
        <end position="25" status="greater than"/>
    </location>
</feature>
<feature type="non-terminal residue">
    <location>
        <position position="25"/>
    </location>
</feature>
<keyword id="KW-0997">Cell inner membrane</keyword>
<keyword id="KW-1003">Cell membrane</keyword>
<keyword id="KW-0186">Copper</keyword>
<keyword id="KW-0249">Electron transport</keyword>
<keyword id="KW-0349">Heme</keyword>
<keyword id="KW-0375">Hydrogen ion transport</keyword>
<keyword id="KW-0406">Ion transport</keyword>
<keyword id="KW-0408">Iron</keyword>
<keyword id="KW-0472">Membrane</keyword>
<keyword id="KW-0479">Metal-binding</keyword>
<keyword id="KW-0679">Respiratory chain</keyword>
<keyword id="KW-1278">Translocase</keyword>
<keyword id="KW-0812">Transmembrane</keyword>
<keyword id="KW-0813">Transport</keyword>
<comment type="function">
    <text>Subunit I and II form the functional core of the enzyme complex. Electrons originating in cytochrome c are transferred via heme a and Cu(A) to the binuclear center formed by heme a3 and Cu(B). This cytochrome c oxidase shows proton pump activity across the membrane in addition to the electron transfer.</text>
</comment>
<comment type="catalytic activity">
    <reaction>
        <text>4 Fe(II)-[cytochrome c] + O2 + 8 H(+)(in) = 4 Fe(III)-[cytochrome c] + 2 H2O + 4 H(+)(out)</text>
        <dbReference type="Rhea" id="RHEA:11436"/>
        <dbReference type="Rhea" id="RHEA-COMP:10350"/>
        <dbReference type="Rhea" id="RHEA-COMP:14399"/>
        <dbReference type="ChEBI" id="CHEBI:15377"/>
        <dbReference type="ChEBI" id="CHEBI:15378"/>
        <dbReference type="ChEBI" id="CHEBI:15379"/>
        <dbReference type="ChEBI" id="CHEBI:29033"/>
        <dbReference type="ChEBI" id="CHEBI:29034"/>
        <dbReference type="EC" id="7.1.1.9"/>
    </reaction>
</comment>
<comment type="cofactor">
    <cofactor>
        <name>Cu(2+)</name>
        <dbReference type="ChEBI" id="CHEBI:29036"/>
    </cofactor>
    <text>Binds 1 copper B ion per subunit.</text>
</comment>
<comment type="cofactor">
    <cofactor>
        <name>heme</name>
        <dbReference type="ChEBI" id="CHEBI:30413"/>
    </cofactor>
    <text>Binds 2 heme groups per subunit.</text>
</comment>
<comment type="pathway">
    <text>Energy metabolism; oxidative phosphorylation.</text>
</comment>
<comment type="subcellular location">
    <subcellularLocation>
        <location>Cell inner membrane</location>
        <topology>Multi-pass membrane protein</topology>
    </subcellularLocation>
</comment>
<comment type="similarity">
    <text evidence="1">Belongs to the heme-copper respiratory oxidase family.</text>
</comment>
<evidence type="ECO:0000305" key="1"/>
<organism>
    <name type="scientific">Paracoccus versutus</name>
    <name type="common">Thiobacillus versutus</name>
    <dbReference type="NCBI Taxonomy" id="34007"/>
    <lineage>
        <taxon>Bacteria</taxon>
        <taxon>Pseudomonadati</taxon>
        <taxon>Pseudomonadota</taxon>
        <taxon>Alphaproteobacteria</taxon>
        <taxon>Rhodobacterales</taxon>
        <taxon>Paracoccaceae</taxon>
        <taxon>Paracoccus</taxon>
    </lineage>
</organism>
<gene>
    <name type="primary">ctaD</name>
    <name type="synonym">coxI</name>
</gene>
<dbReference type="EC" id="7.1.1.9"/>
<dbReference type="EMBL" id="X62808">
    <property type="protein sequence ID" value="CAA44628.1"/>
    <property type="molecule type" value="Genomic_DNA"/>
</dbReference>
<dbReference type="PIR" id="S23631">
    <property type="entry name" value="S23631"/>
</dbReference>
<dbReference type="eggNOG" id="COG0843">
    <property type="taxonomic scope" value="Bacteria"/>
</dbReference>
<dbReference type="UniPathway" id="UPA00705"/>
<dbReference type="GO" id="GO:0005886">
    <property type="term" value="C:plasma membrane"/>
    <property type="evidence" value="ECO:0007669"/>
    <property type="project" value="UniProtKB-SubCell"/>
</dbReference>
<dbReference type="GO" id="GO:0004129">
    <property type="term" value="F:cytochrome-c oxidase activity"/>
    <property type="evidence" value="ECO:0007669"/>
    <property type="project" value="UniProtKB-EC"/>
</dbReference>
<dbReference type="GO" id="GO:0046872">
    <property type="term" value="F:metal ion binding"/>
    <property type="evidence" value="ECO:0007669"/>
    <property type="project" value="UniProtKB-KW"/>
</dbReference>
<dbReference type="GO" id="GO:0006119">
    <property type="term" value="P:oxidative phosphorylation"/>
    <property type="evidence" value="ECO:0007669"/>
    <property type="project" value="UniProtKB-UniPathway"/>
</dbReference>
<proteinExistence type="inferred from homology"/>
<sequence>MADAAVHGHGDHHDTRGFFTRWFMS</sequence>
<name>COX1_PARVE</name>
<reference key="1">
    <citation type="journal article" date="1992" name="J. Bacteriol.">
        <title>Cytochrome c550 from Thiobacillus versutus: cloning, expression in Escherichia coli, and purification of the heterologous holoprotein.</title>
        <authorList>
            <person name="Ubbink M."/>
            <person name="van Beeumen J."/>
            <person name="Canters G.W."/>
        </authorList>
    </citation>
    <scope>NUCLEOTIDE SEQUENCE [GENOMIC DNA]</scope>
    <source>
        <strain>ATCC 25364 / DSM 582 / JCM 20754 / NBRC 14567 / VKM B-2163</strain>
    </source>
</reference>
<protein>
    <recommendedName>
        <fullName>Cytochrome c oxidase subunit 1</fullName>
        <ecNumber>7.1.1.9</ecNumber>
    </recommendedName>
    <alternativeName>
        <fullName>Cytochrome aa3 subunit 1</fullName>
    </alternativeName>
    <alternativeName>
        <fullName>Cytochrome c oxidase polypeptide I</fullName>
    </alternativeName>
</protein>
<accession>Q00502</accession>